<keyword id="KW-0235">DNA replication</keyword>
<keyword id="KW-0238">DNA-binding</keyword>
<keyword id="KW-0539">Nucleus</keyword>
<evidence type="ECO:0000250" key="1"/>
<evidence type="ECO:0000255" key="2"/>
<evidence type="ECO:0000305" key="3"/>
<proteinExistence type="evidence at transcript level"/>
<gene>
    <name type="primary">PCNA</name>
</gene>
<name>PCNA_STYCL</name>
<feature type="chain" id="PRO_0000149172" description="Proliferating cell nuclear antigen">
    <location>
        <begin position="1"/>
        <end position="264"/>
    </location>
</feature>
<feature type="DNA-binding region" evidence="2">
    <location>
        <begin position="61"/>
        <end position="80"/>
    </location>
</feature>
<reference key="1">
    <citation type="journal article" date="1996" name="Dev. Biol.">
        <title>PCNA mRNA has a 3'UTR antisense to yellow crescent RNA and is localized in ascidian eggs and embryos.</title>
        <authorList>
            <person name="Swalla B.J."/>
            <person name="Jeffery W.R."/>
        </authorList>
    </citation>
    <scope>NUCLEOTIDE SEQUENCE [MRNA]</scope>
</reference>
<protein>
    <recommendedName>
        <fullName>Proliferating cell nuclear antigen</fullName>
        <shortName>PCNA</shortName>
    </recommendedName>
    <alternativeName>
        <fullName>Cyclin</fullName>
    </alternativeName>
</protein>
<comment type="function">
    <text evidence="1">This protein is an auxiliary protein of DNA polymerase delta and is involved in the control of eukaryotic DNA replication by increasing the polymerase's processibility during elongation of the leading strand.</text>
</comment>
<comment type="subunit">
    <text evidence="1">Homotrimer. Forms a complex with activator 1 heteropentamer in the presence of ATP (By similarity).</text>
</comment>
<comment type="subcellular location">
    <subcellularLocation>
        <location>Nucleus</location>
    </subcellularLocation>
</comment>
<comment type="similarity">
    <text evidence="3">Belongs to the PCNA family.</text>
</comment>
<organism>
    <name type="scientific">Styela clava</name>
    <name type="common">Sea squirt</name>
    <dbReference type="NCBI Taxonomy" id="7725"/>
    <lineage>
        <taxon>Eukaryota</taxon>
        <taxon>Metazoa</taxon>
        <taxon>Chordata</taxon>
        <taxon>Tunicata</taxon>
        <taxon>Ascidiacea</taxon>
        <taxon>Stolidobranchia</taxon>
        <taxon>Styelidae</taxon>
        <taxon>Styela</taxon>
    </lineage>
</organism>
<dbReference type="EMBL" id="L42763">
    <property type="protein sequence ID" value="AAC37303.1"/>
    <property type="molecule type" value="mRNA"/>
</dbReference>
<dbReference type="SMR" id="P53358"/>
<dbReference type="OrthoDB" id="534348at2759"/>
<dbReference type="GO" id="GO:0043626">
    <property type="term" value="C:PCNA complex"/>
    <property type="evidence" value="ECO:0007669"/>
    <property type="project" value="TreeGrafter"/>
</dbReference>
<dbReference type="GO" id="GO:0003677">
    <property type="term" value="F:DNA binding"/>
    <property type="evidence" value="ECO:0007669"/>
    <property type="project" value="UniProtKB-KW"/>
</dbReference>
<dbReference type="GO" id="GO:0030337">
    <property type="term" value="F:DNA polymerase processivity factor activity"/>
    <property type="evidence" value="ECO:0007669"/>
    <property type="project" value="InterPro"/>
</dbReference>
<dbReference type="GO" id="GO:0006272">
    <property type="term" value="P:leading strand elongation"/>
    <property type="evidence" value="ECO:0007669"/>
    <property type="project" value="TreeGrafter"/>
</dbReference>
<dbReference type="GO" id="GO:0006298">
    <property type="term" value="P:mismatch repair"/>
    <property type="evidence" value="ECO:0007669"/>
    <property type="project" value="TreeGrafter"/>
</dbReference>
<dbReference type="GO" id="GO:0006275">
    <property type="term" value="P:regulation of DNA replication"/>
    <property type="evidence" value="ECO:0007669"/>
    <property type="project" value="InterPro"/>
</dbReference>
<dbReference type="GO" id="GO:0019985">
    <property type="term" value="P:translesion synthesis"/>
    <property type="evidence" value="ECO:0007669"/>
    <property type="project" value="TreeGrafter"/>
</dbReference>
<dbReference type="CDD" id="cd00577">
    <property type="entry name" value="PCNA"/>
    <property type="match status" value="1"/>
</dbReference>
<dbReference type="FunFam" id="3.10.150.10:FF:000006">
    <property type="entry name" value="Proliferating cell nuclear antigen"/>
    <property type="match status" value="1"/>
</dbReference>
<dbReference type="FunFam" id="3.10.150.10:FF:000008">
    <property type="entry name" value="Proliferating cell nuclear antigen"/>
    <property type="match status" value="1"/>
</dbReference>
<dbReference type="FunFam" id="3.70.10.10:FF:000001">
    <property type="entry name" value="Proliferating cell nuclear antigen"/>
    <property type="match status" value="1"/>
</dbReference>
<dbReference type="Gene3D" id="3.10.150.10">
    <property type="entry name" value="DNA Polymerase III, subunit A, domain 2"/>
    <property type="match status" value="2"/>
</dbReference>
<dbReference type="HAMAP" id="MF_00317">
    <property type="entry name" value="DNApol_clamp_arch"/>
    <property type="match status" value="1"/>
</dbReference>
<dbReference type="InterPro" id="IPR046938">
    <property type="entry name" value="DNA_clamp_sf"/>
</dbReference>
<dbReference type="InterPro" id="IPR000730">
    <property type="entry name" value="Pr_cel_nuc_antig"/>
</dbReference>
<dbReference type="InterPro" id="IPR022649">
    <property type="entry name" value="Pr_cel_nuc_antig_C"/>
</dbReference>
<dbReference type="InterPro" id="IPR022659">
    <property type="entry name" value="Pr_cel_nuc_antig_CS"/>
</dbReference>
<dbReference type="InterPro" id="IPR022648">
    <property type="entry name" value="Pr_cel_nuc_antig_N"/>
</dbReference>
<dbReference type="NCBIfam" id="TIGR00590">
    <property type="entry name" value="pcna"/>
    <property type="match status" value="1"/>
</dbReference>
<dbReference type="PANTHER" id="PTHR11352">
    <property type="entry name" value="PROLIFERATING CELL NUCLEAR ANTIGEN"/>
    <property type="match status" value="1"/>
</dbReference>
<dbReference type="PANTHER" id="PTHR11352:SF0">
    <property type="entry name" value="PROLIFERATING CELL NUCLEAR ANTIGEN"/>
    <property type="match status" value="1"/>
</dbReference>
<dbReference type="Pfam" id="PF02747">
    <property type="entry name" value="PCNA_C"/>
    <property type="match status" value="1"/>
</dbReference>
<dbReference type="Pfam" id="PF00705">
    <property type="entry name" value="PCNA_N"/>
    <property type="match status" value="1"/>
</dbReference>
<dbReference type="PRINTS" id="PR00339">
    <property type="entry name" value="PCNACYCLIN"/>
</dbReference>
<dbReference type="SUPFAM" id="SSF55979">
    <property type="entry name" value="DNA clamp"/>
    <property type="match status" value="2"/>
</dbReference>
<dbReference type="PROSITE" id="PS01251">
    <property type="entry name" value="PCNA_1"/>
    <property type="match status" value="1"/>
</dbReference>
<dbReference type="PROSITE" id="PS00293">
    <property type="entry name" value="PCNA_2"/>
    <property type="match status" value="1"/>
</dbReference>
<sequence>MFEARLIQGSNLKKVQEALKDIVTEASWDCTSSGISLQAMDSSHVSLVQLTLRADGFENFRCDRNLAMGINMTSMAKIMKCAGNDDIITLRAEDNADMLELIFESSKGDKYSQYEMKLMDLDCEQLGIPEQDYSCCVTLPSQEFGRICRDLSQIGECVVITCTKDGVQFSAKGDLGAGKIKLKQNTGSDIKEEEQVTVEISEPVQLTFAIKYLNLFAKASPLSPSVCLSMSNNVPLVVEYKVADMGHIKYFLAPKIEDEEEQDS</sequence>
<accession>P53358</accession>